<name>SAP9_ARATH</name>
<organism>
    <name type="scientific">Arabidopsis thaliana</name>
    <name type="common">Mouse-ear cress</name>
    <dbReference type="NCBI Taxonomy" id="3702"/>
    <lineage>
        <taxon>Eukaryota</taxon>
        <taxon>Viridiplantae</taxon>
        <taxon>Streptophyta</taxon>
        <taxon>Embryophyta</taxon>
        <taxon>Tracheophyta</taxon>
        <taxon>Spermatophyta</taxon>
        <taxon>Magnoliopsida</taxon>
        <taxon>eudicotyledons</taxon>
        <taxon>Gunneridae</taxon>
        <taxon>Pentapetalae</taxon>
        <taxon>rosids</taxon>
        <taxon>malvids</taxon>
        <taxon>Brassicales</taxon>
        <taxon>Brassicaceae</taxon>
        <taxon>Camelineae</taxon>
        <taxon>Arabidopsis</taxon>
    </lineage>
</organism>
<keyword id="KW-0479">Metal-binding</keyword>
<keyword id="KW-1185">Reference proteome</keyword>
<keyword id="KW-0862">Zinc</keyword>
<keyword id="KW-0863">Zinc-finger</keyword>
<dbReference type="EMBL" id="AL021635">
    <property type="protein sequence ID" value="CAA16567.1"/>
    <property type="molecule type" value="Genomic_DNA"/>
</dbReference>
<dbReference type="EMBL" id="AL031018">
    <property type="protein sequence ID" value="CAA19798.1"/>
    <property type="molecule type" value="Genomic_DNA"/>
</dbReference>
<dbReference type="EMBL" id="AL161558">
    <property type="protein sequence ID" value="CAB79237.1"/>
    <property type="molecule type" value="Genomic_DNA"/>
</dbReference>
<dbReference type="EMBL" id="CP002687">
    <property type="protein sequence ID" value="AEE84661.1"/>
    <property type="molecule type" value="Genomic_DNA"/>
</dbReference>
<dbReference type="EMBL" id="CP002687">
    <property type="protein sequence ID" value="AEE84662.1"/>
    <property type="molecule type" value="Genomic_DNA"/>
</dbReference>
<dbReference type="EMBL" id="BT001995">
    <property type="protein sequence ID" value="AAN72006.1"/>
    <property type="molecule type" value="mRNA"/>
</dbReference>
<dbReference type="EMBL" id="BT006563">
    <property type="protein sequence ID" value="AAP21371.1"/>
    <property type="molecule type" value="mRNA"/>
</dbReference>
<dbReference type="PIR" id="T04577">
    <property type="entry name" value="T04577"/>
</dbReference>
<dbReference type="RefSeq" id="NP_194013.1">
    <property type="nucleotide sequence ID" value="NM_118411.4"/>
</dbReference>
<dbReference type="RefSeq" id="NP_974594.1">
    <property type="nucleotide sequence ID" value="NM_202865.1"/>
</dbReference>
<dbReference type="SMR" id="O49663"/>
<dbReference type="BioGRID" id="13670">
    <property type="interactions" value="5"/>
</dbReference>
<dbReference type="FunCoup" id="O49663">
    <property type="interactions" value="2319"/>
</dbReference>
<dbReference type="IntAct" id="O49663">
    <property type="interactions" value="5"/>
</dbReference>
<dbReference type="STRING" id="3702.O49663"/>
<dbReference type="PaxDb" id="3702-AT4G22820.2"/>
<dbReference type="ProteomicsDB" id="226669"/>
<dbReference type="EnsemblPlants" id="AT4G22820.1">
    <property type="protein sequence ID" value="AT4G22820.1"/>
    <property type="gene ID" value="AT4G22820"/>
</dbReference>
<dbReference type="EnsemblPlants" id="AT4G22820.2">
    <property type="protein sequence ID" value="AT4G22820.2"/>
    <property type="gene ID" value="AT4G22820"/>
</dbReference>
<dbReference type="GeneID" id="828381"/>
<dbReference type="Gramene" id="AT4G22820.1">
    <property type="protein sequence ID" value="AT4G22820.1"/>
    <property type="gene ID" value="AT4G22820"/>
</dbReference>
<dbReference type="Gramene" id="AT4G22820.2">
    <property type="protein sequence ID" value="AT4G22820.2"/>
    <property type="gene ID" value="AT4G22820"/>
</dbReference>
<dbReference type="KEGG" id="ath:AT4G22820"/>
<dbReference type="Araport" id="AT4G22820"/>
<dbReference type="TAIR" id="AT4G22820">
    <property type="gene designation" value="SAP9"/>
</dbReference>
<dbReference type="eggNOG" id="KOG3173">
    <property type="taxonomic scope" value="Eukaryota"/>
</dbReference>
<dbReference type="HOGENOM" id="CLU_057016_5_0_1"/>
<dbReference type="InParanoid" id="O49663"/>
<dbReference type="OMA" id="EICKANP"/>
<dbReference type="PhylomeDB" id="O49663"/>
<dbReference type="PRO" id="PR:O49663"/>
<dbReference type="Proteomes" id="UP000006548">
    <property type="component" value="Chromosome 4"/>
</dbReference>
<dbReference type="ExpressionAtlas" id="O49663">
    <property type="expression patterns" value="baseline and differential"/>
</dbReference>
<dbReference type="GO" id="GO:0003677">
    <property type="term" value="F:DNA binding"/>
    <property type="evidence" value="ECO:0007669"/>
    <property type="project" value="InterPro"/>
</dbReference>
<dbReference type="GO" id="GO:0061630">
    <property type="term" value="F:ubiquitin protein ligase activity"/>
    <property type="evidence" value="ECO:0000314"/>
    <property type="project" value="TAIR"/>
</dbReference>
<dbReference type="GO" id="GO:0008270">
    <property type="term" value="F:zinc ion binding"/>
    <property type="evidence" value="ECO:0007669"/>
    <property type="project" value="UniProtKB-KW"/>
</dbReference>
<dbReference type="GO" id="GO:0098542">
    <property type="term" value="P:defense response to other organism"/>
    <property type="evidence" value="ECO:0000315"/>
    <property type="project" value="TAIR"/>
</dbReference>
<dbReference type="GO" id="GO:0043161">
    <property type="term" value="P:proteasome-mediated ubiquitin-dependent protein catabolic process"/>
    <property type="evidence" value="ECO:0000314"/>
    <property type="project" value="TAIR"/>
</dbReference>
<dbReference type="FunFam" id="1.20.5.4770:FF:000007">
    <property type="entry name" value="Zinc finger A20 and AN1 domain-containing stress-associated protein 1"/>
    <property type="match status" value="1"/>
</dbReference>
<dbReference type="FunFam" id="4.10.1110.10:FF:000001">
    <property type="entry name" value="Zinc finger AN1-type containing 6"/>
    <property type="match status" value="1"/>
</dbReference>
<dbReference type="Gene3D" id="1.20.5.4770">
    <property type="match status" value="1"/>
</dbReference>
<dbReference type="Gene3D" id="4.10.1110.10">
    <property type="entry name" value="AN1-like Zinc finger"/>
    <property type="match status" value="1"/>
</dbReference>
<dbReference type="InterPro" id="IPR035896">
    <property type="entry name" value="AN1-like_Znf"/>
</dbReference>
<dbReference type="InterPro" id="IPR050652">
    <property type="entry name" value="AN1_A20_ZnFinger"/>
</dbReference>
<dbReference type="InterPro" id="IPR002653">
    <property type="entry name" value="Znf_A20"/>
</dbReference>
<dbReference type="InterPro" id="IPR000058">
    <property type="entry name" value="Znf_AN1"/>
</dbReference>
<dbReference type="PANTHER" id="PTHR10634">
    <property type="entry name" value="AN1-TYPE ZINC FINGER PROTEIN"/>
    <property type="match status" value="1"/>
</dbReference>
<dbReference type="PANTHER" id="PTHR10634:SF97">
    <property type="entry name" value="ZINC FINGER A20 AND AN1 DOMAIN-CONTAINING STRESS-ASSOCIATED PROTEIN 9"/>
    <property type="match status" value="1"/>
</dbReference>
<dbReference type="Pfam" id="PF01754">
    <property type="entry name" value="zf-A20"/>
    <property type="match status" value="1"/>
</dbReference>
<dbReference type="Pfam" id="PF01428">
    <property type="entry name" value="zf-AN1"/>
    <property type="match status" value="1"/>
</dbReference>
<dbReference type="SMART" id="SM00259">
    <property type="entry name" value="ZnF_A20"/>
    <property type="match status" value="1"/>
</dbReference>
<dbReference type="SMART" id="SM00154">
    <property type="entry name" value="ZnF_AN1"/>
    <property type="match status" value="1"/>
</dbReference>
<dbReference type="SUPFAM" id="SSF118310">
    <property type="entry name" value="AN1-like Zinc finger"/>
    <property type="match status" value="1"/>
</dbReference>
<dbReference type="SUPFAM" id="SSF57716">
    <property type="entry name" value="Glucocorticoid receptor-like (DNA-binding domain)"/>
    <property type="match status" value="1"/>
</dbReference>
<dbReference type="PROSITE" id="PS51036">
    <property type="entry name" value="ZF_A20"/>
    <property type="match status" value="1"/>
</dbReference>
<dbReference type="PROSITE" id="PS51039">
    <property type="entry name" value="ZF_AN1"/>
    <property type="match status" value="1"/>
</dbReference>
<accession>O49663</accession>
<evidence type="ECO:0000250" key="1"/>
<evidence type="ECO:0000255" key="2">
    <source>
        <dbReference type="PROSITE-ProRule" id="PRU00449"/>
    </source>
</evidence>
<evidence type="ECO:0000255" key="3">
    <source>
        <dbReference type="PROSITE-ProRule" id="PRU00451"/>
    </source>
</evidence>
<comment type="function">
    <text evidence="1">May be involved in environmental stress response.</text>
</comment>
<gene>
    <name type="primary">SAP9</name>
    <name type="ordered locus">At4g22820</name>
    <name type="ORF">F7H19.10</name>
    <name type="ORF">T12H17.210</name>
</gene>
<sequence length="176" mass="18903">MGSEQNDSTSFTQSQASEPKLCVKGCGFFGSPSNMDLCSKCYRGICAEEAQTAVAKAAVEKSFKPSPPRSLFIAEPPAVVVEPKPEKAAVVVVSAEPSSSAVPEANEPSRPARTNRCLCCNKKVGIMGFKCKCGSTFCGEHRYPETHDCSFDFKEVGRGEIAKANPVVKADKIQRF</sequence>
<reference key="1">
    <citation type="journal article" date="1999" name="Nature">
        <title>Sequence and analysis of chromosome 4 of the plant Arabidopsis thaliana.</title>
        <authorList>
            <person name="Mayer K.F.X."/>
            <person name="Schueller C."/>
            <person name="Wambutt R."/>
            <person name="Murphy G."/>
            <person name="Volckaert G."/>
            <person name="Pohl T."/>
            <person name="Duesterhoeft A."/>
            <person name="Stiekema W."/>
            <person name="Entian K.-D."/>
            <person name="Terryn N."/>
            <person name="Harris B."/>
            <person name="Ansorge W."/>
            <person name="Brandt P."/>
            <person name="Grivell L.A."/>
            <person name="Rieger M."/>
            <person name="Weichselgartner M."/>
            <person name="de Simone V."/>
            <person name="Obermaier B."/>
            <person name="Mache R."/>
            <person name="Mueller M."/>
            <person name="Kreis M."/>
            <person name="Delseny M."/>
            <person name="Puigdomenech P."/>
            <person name="Watson M."/>
            <person name="Schmidtheini T."/>
            <person name="Reichert B."/>
            <person name="Portetelle D."/>
            <person name="Perez-Alonso M."/>
            <person name="Boutry M."/>
            <person name="Bancroft I."/>
            <person name="Vos P."/>
            <person name="Hoheisel J."/>
            <person name="Zimmermann W."/>
            <person name="Wedler H."/>
            <person name="Ridley P."/>
            <person name="Langham S.-A."/>
            <person name="McCullagh B."/>
            <person name="Bilham L."/>
            <person name="Robben J."/>
            <person name="van der Schueren J."/>
            <person name="Grymonprez B."/>
            <person name="Chuang Y.-J."/>
            <person name="Vandenbussche F."/>
            <person name="Braeken M."/>
            <person name="Weltjens I."/>
            <person name="Voet M."/>
            <person name="Bastiaens I."/>
            <person name="Aert R."/>
            <person name="Defoor E."/>
            <person name="Weitzenegger T."/>
            <person name="Bothe G."/>
            <person name="Ramsperger U."/>
            <person name="Hilbert H."/>
            <person name="Braun M."/>
            <person name="Holzer E."/>
            <person name="Brandt A."/>
            <person name="Peters S."/>
            <person name="van Staveren M."/>
            <person name="Dirkse W."/>
            <person name="Mooijman P."/>
            <person name="Klein Lankhorst R."/>
            <person name="Rose M."/>
            <person name="Hauf J."/>
            <person name="Koetter P."/>
            <person name="Berneiser S."/>
            <person name="Hempel S."/>
            <person name="Feldpausch M."/>
            <person name="Lamberth S."/>
            <person name="Van den Daele H."/>
            <person name="De Keyser A."/>
            <person name="Buysshaert C."/>
            <person name="Gielen J."/>
            <person name="Villarroel R."/>
            <person name="De Clercq R."/>
            <person name="van Montagu M."/>
            <person name="Rogers J."/>
            <person name="Cronin A."/>
            <person name="Quail M.A."/>
            <person name="Bray-Allen S."/>
            <person name="Clark L."/>
            <person name="Doggett J."/>
            <person name="Hall S."/>
            <person name="Kay M."/>
            <person name="Lennard N."/>
            <person name="McLay K."/>
            <person name="Mayes R."/>
            <person name="Pettett A."/>
            <person name="Rajandream M.A."/>
            <person name="Lyne M."/>
            <person name="Benes V."/>
            <person name="Rechmann S."/>
            <person name="Borkova D."/>
            <person name="Bloecker H."/>
            <person name="Scharfe M."/>
            <person name="Grimm M."/>
            <person name="Loehnert T.-H."/>
            <person name="Dose S."/>
            <person name="de Haan M."/>
            <person name="Maarse A.C."/>
            <person name="Schaefer M."/>
            <person name="Mueller-Auer S."/>
            <person name="Gabel C."/>
            <person name="Fuchs M."/>
            <person name="Fartmann B."/>
            <person name="Granderath K."/>
            <person name="Dauner D."/>
            <person name="Herzl A."/>
            <person name="Neumann S."/>
            <person name="Argiriou A."/>
            <person name="Vitale D."/>
            <person name="Liguori R."/>
            <person name="Piravandi E."/>
            <person name="Massenet O."/>
            <person name="Quigley F."/>
            <person name="Clabauld G."/>
            <person name="Muendlein A."/>
            <person name="Felber R."/>
            <person name="Schnabl S."/>
            <person name="Hiller R."/>
            <person name="Schmidt W."/>
            <person name="Lecharny A."/>
            <person name="Aubourg S."/>
            <person name="Chefdor F."/>
            <person name="Cooke R."/>
            <person name="Berger C."/>
            <person name="Monfort A."/>
            <person name="Casacuberta E."/>
            <person name="Gibbons T."/>
            <person name="Weber N."/>
            <person name="Vandenbol M."/>
            <person name="Bargues M."/>
            <person name="Terol J."/>
            <person name="Torres A."/>
            <person name="Perez-Perez A."/>
            <person name="Purnelle B."/>
            <person name="Bent E."/>
            <person name="Johnson S."/>
            <person name="Tacon D."/>
            <person name="Jesse T."/>
            <person name="Heijnen L."/>
            <person name="Schwarz S."/>
            <person name="Scholler P."/>
            <person name="Heber S."/>
            <person name="Francs P."/>
            <person name="Bielke C."/>
            <person name="Frishman D."/>
            <person name="Haase D."/>
            <person name="Lemcke K."/>
            <person name="Mewes H.-W."/>
            <person name="Stocker S."/>
            <person name="Zaccaria P."/>
            <person name="Bevan M."/>
            <person name="Wilson R.K."/>
            <person name="de la Bastide M."/>
            <person name="Habermann K."/>
            <person name="Parnell L."/>
            <person name="Dedhia N."/>
            <person name="Gnoj L."/>
            <person name="Schutz K."/>
            <person name="Huang E."/>
            <person name="Spiegel L."/>
            <person name="Sekhon M."/>
            <person name="Murray J."/>
            <person name="Sheet P."/>
            <person name="Cordes M."/>
            <person name="Abu-Threideh J."/>
            <person name="Stoneking T."/>
            <person name="Kalicki J."/>
            <person name="Graves T."/>
            <person name="Harmon G."/>
            <person name="Edwards J."/>
            <person name="Latreille P."/>
            <person name="Courtney L."/>
            <person name="Cloud J."/>
            <person name="Abbott A."/>
            <person name="Scott K."/>
            <person name="Johnson D."/>
            <person name="Minx P."/>
            <person name="Bentley D."/>
            <person name="Fulton B."/>
            <person name="Miller N."/>
            <person name="Greco T."/>
            <person name="Kemp K."/>
            <person name="Kramer J."/>
            <person name="Fulton L."/>
            <person name="Mardis E."/>
            <person name="Dante M."/>
            <person name="Pepin K."/>
            <person name="Hillier L.W."/>
            <person name="Nelson J."/>
            <person name="Spieth J."/>
            <person name="Ryan E."/>
            <person name="Andrews S."/>
            <person name="Geisel C."/>
            <person name="Layman D."/>
            <person name="Du H."/>
            <person name="Ali J."/>
            <person name="Berghoff A."/>
            <person name="Jones K."/>
            <person name="Drone K."/>
            <person name="Cotton M."/>
            <person name="Joshu C."/>
            <person name="Antonoiu B."/>
            <person name="Zidanic M."/>
            <person name="Strong C."/>
            <person name="Sun H."/>
            <person name="Lamar B."/>
            <person name="Yordan C."/>
            <person name="Ma P."/>
            <person name="Zhong J."/>
            <person name="Preston R."/>
            <person name="Vil D."/>
            <person name="Shekher M."/>
            <person name="Matero A."/>
            <person name="Shah R."/>
            <person name="Swaby I.K."/>
            <person name="O'Shaughnessy A."/>
            <person name="Rodriguez M."/>
            <person name="Hoffman J."/>
            <person name="Till S."/>
            <person name="Granat S."/>
            <person name="Shohdy N."/>
            <person name="Hasegawa A."/>
            <person name="Hameed A."/>
            <person name="Lodhi M."/>
            <person name="Johnson A."/>
            <person name="Chen E."/>
            <person name="Marra M.A."/>
            <person name="Martienssen R."/>
            <person name="McCombie W.R."/>
        </authorList>
    </citation>
    <scope>NUCLEOTIDE SEQUENCE [LARGE SCALE GENOMIC DNA]</scope>
    <source>
        <strain>cv. Columbia</strain>
    </source>
</reference>
<reference key="2">
    <citation type="journal article" date="2017" name="Plant J.">
        <title>Araport11: a complete reannotation of the Arabidopsis thaliana reference genome.</title>
        <authorList>
            <person name="Cheng C.Y."/>
            <person name="Krishnakumar V."/>
            <person name="Chan A.P."/>
            <person name="Thibaud-Nissen F."/>
            <person name="Schobel S."/>
            <person name="Town C.D."/>
        </authorList>
    </citation>
    <scope>GENOME REANNOTATION</scope>
    <source>
        <strain>cv. Columbia</strain>
    </source>
</reference>
<reference key="3">
    <citation type="journal article" date="2003" name="Science">
        <title>Empirical analysis of transcriptional activity in the Arabidopsis genome.</title>
        <authorList>
            <person name="Yamada K."/>
            <person name="Lim J."/>
            <person name="Dale J.M."/>
            <person name="Chen H."/>
            <person name="Shinn P."/>
            <person name="Palm C.J."/>
            <person name="Southwick A.M."/>
            <person name="Wu H.C."/>
            <person name="Kim C.J."/>
            <person name="Nguyen M."/>
            <person name="Pham P.K."/>
            <person name="Cheuk R.F."/>
            <person name="Karlin-Newmann G."/>
            <person name="Liu S.X."/>
            <person name="Lam B."/>
            <person name="Sakano H."/>
            <person name="Wu T."/>
            <person name="Yu G."/>
            <person name="Miranda M."/>
            <person name="Quach H.L."/>
            <person name="Tripp M."/>
            <person name="Chang C.H."/>
            <person name="Lee J.M."/>
            <person name="Toriumi M.J."/>
            <person name="Chan M.M."/>
            <person name="Tang C.C."/>
            <person name="Onodera C.S."/>
            <person name="Deng J.M."/>
            <person name="Akiyama K."/>
            <person name="Ansari Y."/>
            <person name="Arakawa T."/>
            <person name="Banh J."/>
            <person name="Banno F."/>
            <person name="Bowser L."/>
            <person name="Brooks S.Y."/>
            <person name="Carninci P."/>
            <person name="Chao Q."/>
            <person name="Choy N."/>
            <person name="Enju A."/>
            <person name="Goldsmith A.D."/>
            <person name="Gurjal M."/>
            <person name="Hansen N.F."/>
            <person name="Hayashizaki Y."/>
            <person name="Johnson-Hopson C."/>
            <person name="Hsuan V.W."/>
            <person name="Iida K."/>
            <person name="Karnes M."/>
            <person name="Khan S."/>
            <person name="Koesema E."/>
            <person name="Ishida J."/>
            <person name="Jiang P.X."/>
            <person name="Jones T."/>
            <person name="Kawai J."/>
            <person name="Kamiya A."/>
            <person name="Meyers C."/>
            <person name="Nakajima M."/>
            <person name="Narusaka M."/>
            <person name="Seki M."/>
            <person name="Sakurai T."/>
            <person name="Satou M."/>
            <person name="Tamse R."/>
            <person name="Vaysberg M."/>
            <person name="Wallender E.K."/>
            <person name="Wong C."/>
            <person name="Yamamura Y."/>
            <person name="Yuan S."/>
            <person name="Shinozaki K."/>
            <person name="Davis R.W."/>
            <person name="Theologis A."/>
            <person name="Ecker J.R."/>
        </authorList>
    </citation>
    <scope>NUCLEOTIDE SEQUENCE [LARGE SCALE MRNA]</scope>
    <source>
        <strain>cv. Columbia</strain>
    </source>
</reference>
<reference key="4">
    <citation type="journal article" date="2006" name="Mol. Genet. Genomics">
        <title>Genome-wide analysis of the stress associated protein (SAP) gene family containing A20/AN1 zinc-finger(s) in rice and their phylogenetic relationship with Arabidopsis.</title>
        <authorList>
            <person name="Vij S."/>
            <person name="Tyagi A.K."/>
        </authorList>
    </citation>
    <scope>GENE FAMILY</scope>
</reference>
<feature type="chain" id="PRO_0000269860" description="Zinc finger A20 and AN1 domain-containing stress-associated protein 9">
    <location>
        <begin position="1"/>
        <end position="176"/>
    </location>
</feature>
<feature type="zinc finger region" description="A20-type" evidence="3">
    <location>
        <begin position="16"/>
        <end position="50"/>
    </location>
</feature>
<feature type="zinc finger region" description="AN1-type" evidence="2">
    <location>
        <begin position="111"/>
        <end position="157"/>
    </location>
</feature>
<feature type="binding site" evidence="3">
    <location>
        <position position="22"/>
    </location>
    <ligand>
        <name>Zn(2+)</name>
        <dbReference type="ChEBI" id="CHEBI:29105"/>
        <label>1</label>
    </ligand>
</feature>
<feature type="binding site" evidence="3">
    <location>
        <position position="26"/>
    </location>
    <ligand>
        <name>Zn(2+)</name>
        <dbReference type="ChEBI" id="CHEBI:29105"/>
        <label>1</label>
    </ligand>
</feature>
<feature type="binding site" evidence="3">
    <location>
        <position position="38"/>
    </location>
    <ligand>
        <name>Zn(2+)</name>
        <dbReference type="ChEBI" id="CHEBI:29105"/>
        <label>1</label>
    </ligand>
</feature>
<feature type="binding site" evidence="3">
    <location>
        <position position="41"/>
    </location>
    <ligand>
        <name>Zn(2+)</name>
        <dbReference type="ChEBI" id="CHEBI:29105"/>
        <label>1</label>
    </ligand>
</feature>
<feature type="binding site" evidence="2">
    <location>
        <position position="117"/>
    </location>
    <ligand>
        <name>Zn(2+)</name>
        <dbReference type="ChEBI" id="CHEBI:29105"/>
        <label>2</label>
    </ligand>
</feature>
<feature type="binding site" evidence="2">
    <location>
        <position position="120"/>
    </location>
    <ligand>
        <name>Zn(2+)</name>
        <dbReference type="ChEBI" id="CHEBI:29105"/>
        <label>2</label>
    </ligand>
</feature>
<feature type="binding site" evidence="2">
    <location>
        <position position="131"/>
    </location>
    <ligand>
        <name>Zn(2+)</name>
        <dbReference type="ChEBI" id="CHEBI:29105"/>
        <label>3</label>
    </ligand>
</feature>
<feature type="binding site" evidence="2">
    <location>
        <position position="133"/>
    </location>
    <ligand>
        <name>Zn(2+)</name>
        <dbReference type="ChEBI" id="CHEBI:29105"/>
        <label>3</label>
    </ligand>
</feature>
<feature type="binding site" evidence="2">
    <location>
        <position position="138"/>
    </location>
    <ligand>
        <name>Zn(2+)</name>
        <dbReference type="ChEBI" id="CHEBI:29105"/>
        <label>2</label>
    </ligand>
</feature>
<feature type="binding site" evidence="2">
    <location>
        <position position="141"/>
    </location>
    <ligand>
        <name>Zn(2+)</name>
        <dbReference type="ChEBI" id="CHEBI:29105"/>
        <label>2</label>
    </ligand>
</feature>
<feature type="binding site" evidence="2">
    <location>
        <position position="147"/>
    </location>
    <ligand>
        <name>Zn(2+)</name>
        <dbReference type="ChEBI" id="CHEBI:29105"/>
        <label>3</label>
    </ligand>
</feature>
<feature type="binding site" evidence="2">
    <location>
        <position position="149"/>
    </location>
    <ligand>
        <name>Zn(2+)</name>
        <dbReference type="ChEBI" id="CHEBI:29105"/>
        <label>3</label>
    </ligand>
</feature>
<protein>
    <recommendedName>
        <fullName>Zinc finger A20 and AN1 domain-containing stress-associated protein 9</fullName>
        <shortName>AtSAP9</shortName>
    </recommendedName>
</protein>
<proteinExistence type="evidence at transcript level"/>